<organism>
    <name type="scientific">Rhodobacter capsulatus (strain ATCC BAA-309 / NBRC 16581 / SB1003)</name>
    <dbReference type="NCBI Taxonomy" id="272942"/>
    <lineage>
        <taxon>Bacteria</taxon>
        <taxon>Pseudomonadati</taxon>
        <taxon>Pseudomonadota</taxon>
        <taxon>Alphaproteobacteria</taxon>
        <taxon>Rhodobacterales</taxon>
        <taxon>Rhodobacter group</taxon>
        <taxon>Rhodobacter</taxon>
    </lineage>
</organism>
<reference key="1">
    <citation type="journal article" date="1989" name="Mol. Gen. Genet.">
        <title>Nucleotide sequence, organization, and nature of the protein products of the carotenoid biosynthesis gene cluster of Rhodobacter capsulatus.</title>
        <authorList>
            <person name="Armstrong G.A."/>
            <person name="Alberti M."/>
            <person name="Leach F."/>
            <person name="Hearst J.E."/>
        </authorList>
    </citation>
    <scope>NUCLEOTIDE SEQUENCE [GENOMIC DNA]</scope>
    <source>
        <strain>ATCC BAA-309 / NBRC 16581 / SB1003</strain>
    </source>
</reference>
<reference key="2">
    <citation type="journal article" date="2010" name="J. Bacteriol.">
        <title>Complete genome sequence of the photosynthetic purple nonsulfur bacterium Rhodobacter capsulatus SB 1003.</title>
        <authorList>
            <person name="Strnad H."/>
            <person name="Lapidus A."/>
            <person name="Paces J."/>
            <person name="Ulbrich P."/>
            <person name="Vlcek C."/>
            <person name="Paces V."/>
            <person name="Haselkorn R."/>
        </authorList>
    </citation>
    <scope>NUCLEOTIDE SEQUENCE [LARGE SCALE GENOMIC DNA]</scope>
    <source>
        <strain>ATCC BAA-309 / NBRC 16581 / SB1003</strain>
    </source>
</reference>
<reference key="3">
    <citation type="journal article" date="2003" name="Arch. Biochem. Biophys.">
        <title>Heterologous expression, purification, and enzymatic characterization of the acyclic carotenoid 1,2-hydratase from Rubrivivax gelatinosus.</title>
        <authorList>
            <person name="Steiger S."/>
            <person name="Mazet A."/>
            <person name="Sandmann G."/>
        </authorList>
    </citation>
    <scope>FUNCTION</scope>
    <scope>CATALYTIC ACTIVITY</scope>
    <scope>BIOPHYSICOCHEMICAL PROPERTIES</scope>
    <scope>SUBSTRATE SPECIFICITY</scope>
</reference>
<protein>
    <recommendedName>
        <fullName>Acyclic carotenoid 1,2-hydratase</fullName>
        <ecNumber>4.2.1.131</ecNumber>
    </recommendedName>
    <alternativeName>
        <fullName>Hydroxyneurosporene synthase</fullName>
    </alternativeName>
    <alternativeName>
        <fullName>Lycopene hydratase</fullName>
    </alternativeName>
    <alternativeName>
        <fullName>Neurosporene hydratase</fullName>
    </alternativeName>
</protein>
<keyword id="KW-0125">Carotenoid biosynthesis</keyword>
<keyword id="KW-0149">Chlorophyll biosynthesis</keyword>
<keyword id="KW-0456">Lyase</keyword>
<keyword id="KW-0602">Photosynthesis</keyword>
<keyword id="KW-1185">Reference proteome</keyword>
<proteinExistence type="evidence at protein level"/>
<evidence type="ECO:0000269" key="1">
    <source>
    </source>
</evidence>
<evidence type="ECO:0000305" key="2"/>
<feature type="chain" id="PRO_0000079365" description="Acyclic carotenoid 1,2-hydratase">
    <location>
        <begin position="1"/>
        <end position="281"/>
    </location>
</feature>
<dbReference type="EC" id="4.2.1.131"/>
<dbReference type="EMBL" id="X52291">
    <property type="protein sequence ID" value="CAA36536.1"/>
    <property type="molecule type" value="Genomic_DNA"/>
</dbReference>
<dbReference type="EMBL" id="Z11165">
    <property type="protein sequence ID" value="CAA77543.1"/>
    <property type="molecule type" value="Genomic_DNA"/>
</dbReference>
<dbReference type="EMBL" id="CP001312">
    <property type="protein sequence ID" value="ADE84447.1"/>
    <property type="molecule type" value="Genomic_DNA"/>
</dbReference>
<dbReference type="PIR" id="S04405">
    <property type="entry name" value="S04405"/>
</dbReference>
<dbReference type="STRING" id="272942.RCAP_rcc00682"/>
<dbReference type="KEGG" id="rcp:RCAP_rcc00682"/>
<dbReference type="eggNOG" id="COG5621">
    <property type="taxonomic scope" value="Bacteria"/>
</dbReference>
<dbReference type="HOGENOM" id="CLU_056173_0_0_5"/>
<dbReference type="OrthoDB" id="5491608at2"/>
<dbReference type="BioCyc" id="MetaCyc:MONOMER-14930"/>
<dbReference type="SABIO-RK" id="P17058"/>
<dbReference type="UniPathway" id="UPA00683"/>
<dbReference type="Proteomes" id="UP000002361">
    <property type="component" value="Chromosome"/>
</dbReference>
<dbReference type="GO" id="GO:0016836">
    <property type="term" value="F:hydro-lyase activity"/>
    <property type="evidence" value="ECO:0000314"/>
    <property type="project" value="UniProtKB"/>
</dbReference>
<dbReference type="GO" id="GO:0016116">
    <property type="term" value="P:carotenoid metabolic process"/>
    <property type="evidence" value="ECO:0000314"/>
    <property type="project" value="UniProtKB"/>
</dbReference>
<dbReference type="GO" id="GO:0015995">
    <property type="term" value="P:chlorophyll biosynthetic process"/>
    <property type="evidence" value="ECO:0007669"/>
    <property type="project" value="UniProtKB-KW"/>
</dbReference>
<dbReference type="GO" id="GO:0015979">
    <property type="term" value="P:photosynthesis"/>
    <property type="evidence" value="ECO:0007669"/>
    <property type="project" value="UniProtKB-KW"/>
</dbReference>
<dbReference type="GO" id="GO:1901180">
    <property type="term" value="P:spheroidene biosynthetic process"/>
    <property type="evidence" value="ECO:0000314"/>
    <property type="project" value="UniProtKB"/>
</dbReference>
<dbReference type="CDD" id="cd21471">
    <property type="entry name" value="CrtC-like"/>
    <property type="match status" value="1"/>
</dbReference>
<dbReference type="NCBIfam" id="NF045922">
    <property type="entry name" value="CarotHydtaseCrtCRhod"/>
    <property type="match status" value="1"/>
</dbReference>
<dbReference type="SUPFAM" id="SSF159245">
    <property type="entry name" value="AttH-like"/>
    <property type="match status" value="1"/>
</dbReference>
<name>CRTC_RHOCB</name>
<accession>P17058</accession>
<accession>D5AP75</accession>
<gene>
    <name type="primary">crtC</name>
    <name type="ordered locus">RCAP_rcc00682</name>
</gene>
<comment type="function">
    <text evidence="1">Involved in the biosynthesis of carotenoids spheroidene and spirilloxanthin. Catalyzes the hydration of neurosporene to the corresponding hydroxylated carotenoids 1-HO-neurosporene and that of lycopene to 1-HO-lycopene. It exhibits negligible activity in converting HO-neurosporene, HO-lycopene, or any other derivative such as spheroidene, 1-HO-3,4-didehydrolycopene.</text>
</comment>
<comment type="catalytic activity">
    <reaction evidence="1">
        <text>rhodopin = all-trans-lycopene + H2O</text>
        <dbReference type="Rhea" id="RHEA:31607"/>
        <dbReference type="ChEBI" id="CHEBI:15377"/>
        <dbReference type="ChEBI" id="CHEBI:15948"/>
        <dbReference type="ChEBI" id="CHEBI:35331"/>
        <dbReference type="EC" id="4.2.1.131"/>
    </reaction>
</comment>
<comment type="catalytic activity">
    <reaction evidence="1">
        <text>1,1'-dihydroxy-1,1',2,2'-tetrahydrolycopene = rhodopin + H2O</text>
        <dbReference type="Rhea" id="RHEA:31611"/>
        <dbReference type="ChEBI" id="CHEBI:15377"/>
        <dbReference type="ChEBI" id="CHEBI:35331"/>
        <dbReference type="ChEBI" id="CHEBI:63065"/>
        <dbReference type="EC" id="4.2.1.131"/>
    </reaction>
</comment>
<comment type="biophysicochemical properties">
    <kinetics>
        <KM evidence="1">22.1 uM for lycopene (at pH 8 and at 28 degrees Celsius)</KM>
        <KM evidence="1">24.5 uM for neurosporene (at pH 8 and at 28 degrees Celsius)</KM>
        <Vmax evidence="1">0.38 nmol/h/mg enzyme with neurosporene as substrate (at pH 8 and at 28 degrees Celsius)</Vmax>
        <Vmax evidence="1">1.46 nmol/h/mg enzyme with lycopene as substrate (at pH 8 and at 28 degrees Celsius)</Vmax>
    </kinetics>
</comment>
<comment type="pathway">
    <text>Carotenoid biosynthesis; spheroidene biosynthesis.</text>
</comment>
<comment type="similarity">
    <text evidence="2">Belongs to the CrtC hydratase family.</text>
</comment>
<sequence length="281" mass="31857">MIAFIGSVFSPWYRWSGRREPQNHCCINMVTTGTDGRFTMTDRGRSALRQSRDSFQVGPSKLTWTGKELVIDVDEWGALPKLGKLKGRVVLTPRAVTGVEVRLTPDAGHTWRPFAPIADVEVDLAPGHKWTGHGYFDANFGTRALEEDFSFWTWGRFPLKDRTVCFYDATRLDRTKVALAVQINPDGSVCEIDSPPPLVKMKRTPWFVRRETRCDAGAHPAGVYSLLEAPFYSRALMRTQIDGEETVGMHEALDLVRFRQPVLKPMLAVRVPRRAGWKHKD</sequence>